<keyword id="KW-0007">Acetylation</keyword>
<keyword id="KW-0072">Autophagy</keyword>
<keyword id="KW-0238">DNA-binding</keyword>
<keyword id="KW-0472">Membrane</keyword>
<keyword id="KW-0496">Mitochondrion</keyword>
<keyword id="KW-0509">mRNA transport</keyword>
<keyword id="KW-0539">Nucleus</keyword>
<keyword id="KW-0597">Phosphoprotein</keyword>
<keyword id="KW-1185">Reference proteome</keyword>
<keyword id="KW-0677">Repeat</keyword>
<keyword id="KW-0694">RNA-binding</keyword>
<keyword id="KW-0804">Transcription</keyword>
<keyword id="KW-0805">Transcription regulation</keyword>
<keyword id="KW-0809">Transit peptide</keyword>
<keyword id="KW-0813">Transport</keyword>
<accession>Q5SGE0</accession>
<sequence length="1392" mass="156653">MSALLRPARWLLGAAAVPRLPLSLRLPAGGPGRLPSVVRVAAAGGRPAAGELLSQARLYAIVAEKKDLPEEPAPVRRSGSQFDWALMRLDNSVRRTGRITKGLLQKVFESTCRSGSPGSNQALLLLRSCGSLLPELSLAERTEFAHKIWDKLQQLGTVYDVSHYNALLKVYLQNEYRFSPTDFLAKMEGANIQPNRVTYQRLIAAYCSVGDIEGASKILGFMKTRDLPITEAVFSALVTGHARAGDMESAENILTVMKQAGIEPGPDTYLALLNAHAEKGDIDHVKQILEKVEKSDHYFMDRDFLQIIVSFSKAGYPQYVSEILEKITYERRSIPDAMNLILLLVTEKLEDTAFQVLLALPLARDETSSSFGSFFLRHCVTMDTPAEKLIDYCKRLRDAKVHSSSLQFTLHCALQANKTALAKAVMEALRDEGFPIRTHYFWPLLVGHQKTKNVQGIIDILKIMKEMGVDPDQETYINYVFPCFGSVQSARAALQENKCLPKSTTFAQAEVRNEAINGNLQNILSFLESNALPFSFNSLRGSLILGFRRSMNIDLWSKITELLYKDDRYCQKPPGPTEAVGYFLYNLIDSMSDSEVQAKEERLRQYFHQLREMNVKVSENIYKGICNLLDNYHVPELIKDVKVLVDREKIDSRKTSQFTSSDLESTLEKLKAEGHPVGDPLKQLILLLCSEENMQKALEVKAKYESDMVIGGYAALINLCCRHDNAEDALNLKQEFDRLDPSAVLDTAKYVALVKVLGKHGRVQDAINILKEMKEKDVVIKDAAVLSFFHILNGAALRGEIETVKQLHEAIVTLGLAKPSSNISFPLVTVHLEKDDLPAALEASIACHEKYKVLPRIHDVLCKLIEKGETDLIQKAMDFVSQEQGEMSMLYDLFFAFLQTGNYKEAKKIIETPGIRARPTRLQWFCDRCIANNQVETLEKLVELTEKLFECDRDQMYYNLLKLYKISGDWQRADAVWNKMQEENLIPRERTLRLLAGILKTSNQEVPFDVPELWFGDDRSSLSSSSPSAGDTVTEKMLLSDCRLKKSKDAYNIFLKAEKQDVVFSSEAYSTLVGLLLSKDDFTRAMHVKDFAETHIKGFTLNGAASSLLIIAQVRRDYLKVALETLKAALDLEQVPSELAVTRLIQALALQGDVKSIETIQKMVKGLDAIELSRMVFINNIALAQMKNNEIDAAIENIEHMLASENQTVEHQYFGLSYLFRKVIEEQMEPALEKLSIMSERLANQFALYKPVTDLFLQLVDSGKVDEARALLERCGAIAEQTSILSVFCLRTSQKPKKAPVLKTLLELIPELRENDRVYSCSMKSYVADKDVASAKALYEHLTAKNMKLDDLFLKRYASLLKDVGEPVPFTEPPESFGFYIKQLKEARENPS</sequence>
<organism>
    <name type="scientific">Rattus norvegicus</name>
    <name type="common">Rat</name>
    <dbReference type="NCBI Taxonomy" id="10116"/>
    <lineage>
        <taxon>Eukaryota</taxon>
        <taxon>Metazoa</taxon>
        <taxon>Chordata</taxon>
        <taxon>Craniata</taxon>
        <taxon>Vertebrata</taxon>
        <taxon>Euteleostomi</taxon>
        <taxon>Mammalia</taxon>
        <taxon>Eutheria</taxon>
        <taxon>Euarchontoglires</taxon>
        <taxon>Glires</taxon>
        <taxon>Rodentia</taxon>
        <taxon>Myomorpha</taxon>
        <taxon>Muroidea</taxon>
        <taxon>Muridae</taxon>
        <taxon>Murinae</taxon>
        <taxon>Rattus</taxon>
    </lineage>
</organism>
<evidence type="ECO:0000250" key="1"/>
<evidence type="ECO:0000250" key="2">
    <source>
        <dbReference type="UniProtKB" id="P42704"/>
    </source>
</evidence>
<evidence type="ECO:0000250" key="3">
    <source>
        <dbReference type="UniProtKB" id="Q6PB66"/>
    </source>
</evidence>
<evidence type="ECO:0000255" key="4"/>
<evidence type="ECO:0000269" key="5">
    <source>
    </source>
</evidence>
<evidence type="ECO:0007744" key="6">
    <source>
    </source>
</evidence>
<name>LPPRC_RAT</name>
<gene>
    <name type="primary">Lrpprc</name>
    <name type="synonym">Lrp157</name>
</gene>
<protein>
    <recommendedName>
        <fullName>Leucine-rich PPR motif-containing protein, mitochondrial</fullName>
    </recommendedName>
    <alternativeName>
        <fullName>130 kDa leucine-rich protein</fullName>
        <shortName>LRP 130</shortName>
    </alternativeName>
    <alternativeName>
        <fullName>Leucine rich protein 157</fullName>
        <shortName>rLRP157</shortName>
    </alternativeName>
</protein>
<reference key="1">
    <citation type="journal article" date="2004" name="Eur. J. Neurosci.">
        <title>Isolation of an mRNA binding protein homologue that is expressed in nociceptors.</title>
        <authorList>
            <person name="Eilers H."/>
            <person name="Trilk S.L."/>
            <person name="Lee S.Y."/>
            <person name="Xue Q."/>
            <person name="Jong B.E."/>
            <person name="Moff I."/>
            <person name="Levine J.D."/>
            <person name="Schumacher M.A."/>
        </authorList>
    </citation>
    <scope>NUCLEOTIDE SEQUENCE [MRNA]</scope>
    <scope>SUBCELLULAR LOCATION</scope>
    <scope>TISSUE SPECIFICITY</scope>
    <scope>INDUCTION</scope>
</reference>
<reference key="2">
    <citation type="journal article" date="2012" name="Nat. Commun.">
        <title>Quantitative maps of protein phosphorylation sites across 14 different rat organs and tissues.</title>
        <authorList>
            <person name="Lundby A."/>
            <person name="Secher A."/>
            <person name="Lage K."/>
            <person name="Nordsborg N.B."/>
            <person name="Dmytriyev A."/>
            <person name="Lundby C."/>
            <person name="Olsen J.V."/>
        </authorList>
    </citation>
    <scope>PHOSPHORYLATION [LARGE SCALE ANALYSIS] AT SER-1026</scope>
    <scope>IDENTIFICATION BY MASS SPECTROMETRY [LARGE SCALE ANALYSIS]</scope>
</reference>
<dbReference type="EMBL" id="AY293808">
    <property type="protein sequence ID" value="AAQ74626.1"/>
    <property type="molecule type" value="mRNA"/>
</dbReference>
<dbReference type="RefSeq" id="NP_001008519.1">
    <property type="nucleotide sequence ID" value="NM_001008519.1"/>
</dbReference>
<dbReference type="SMR" id="Q5SGE0"/>
<dbReference type="BioGRID" id="260571">
    <property type="interactions" value="1"/>
</dbReference>
<dbReference type="FunCoup" id="Q5SGE0">
    <property type="interactions" value="3291"/>
</dbReference>
<dbReference type="STRING" id="10116.ENSRNOP00000008200"/>
<dbReference type="GlyGen" id="Q5SGE0">
    <property type="glycosylation" value="1 site"/>
</dbReference>
<dbReference type="iPTMnet" id="Q5SGE0"/>
<dbReference type="PhosphoSitePlus" id="Q5SGE0"/>
<dbReference type="SwissPalm" id="Q5SGE0"/>
<dbReference type="jPOST" id="Q5SGE0"/>
<dbReference type="PaxDb" id="10116-ENSRNOP00000008200"/>
<dbReference type="GeneID" id="313867"/>
<dbReference type="KEGG" id="rno:313867"/>
<dbReference type="UCSC" id="RGD:1306575">
    <property type="organism name" value="rat"/>
</dbReference>
<dbReference type="AGR" id="RGD:1306575"/>
<dbReference type="CTD" id="10128"/>
<dbReference type="RGD" id="1306575">
    <property type="gene designation" value="Lrpprc"/>
</dbReference>
<dbReference type="eggNOG" id="KOG4318">
    <property type="taxonomic scope" value="Eukaryota"/>
</dbReference>
<dbReference type="InParanoid" id="Q5SGE0"/>
<dbReference type="PhylomeDB" id="Q5SGE0"/>
<dbReference type="PRO" id="PR:Q5SGE0"/>
<dbReference type="Proteomes" id="UP000002494">
    <property type="component" value="Unplaced"/>
</dbReference>
<dbReference type="GO" id="GO:0000794">
    <property type="term" value="C:condensed nuclear chromosome"/>
    <property type="evidence" value="ECO:0000250"/>
    <property type="project" value="HGNC-UCL"/>
</dbReference>
<dbReference type="GO" id="GO:0005737">
    <property type="term" value="C:cytoplasm"/>
    <property type="evidence" value="ECO:0000266"/>
    <property type="project" value="RGD"/>
</dbReference>
<dbReference type="GO" id="GO:0005856">
    <property type="term" value="C:cytoskeleton"/>
    <property type="evidence" value="ECO:0000250"/>
    <property type="project" value="HGNC-UCL"/>
</dbReference>
<dbReference type="GO" id="GO:0005874">
    <property type="term" value="C:microtubule"/>
    <property type="evidence" value="ECO:0000266"/>
    <property type="project" value="RGD"/>
</dbReference>
<dbReference type="GO" id="GO:0005759">
    <property type="term" value="C:mitochondrial matrix"/>
    <property type="evidence" value="ECO:0000266"/>
    <property type="project" value="RGD"/>
</dbReference>
<dbReference type="GO" id="GO:0042645">
    <property type="term" value="C:mitochondrial nucleoid"/>
    <property type="evidence" value="ECO:0000266"/>
    <property type="project" value="RGD"/>
</dbReference>
<dbReference type="GO" id="GO:0005739">
    <property type="term" value="C:mitochondrion"/>
    <property type="evidence" value="ECO:0000266"/>
    <property type="project" value="RGD"/>
</dbReference>
<dbReference type="GO" id="GO:0005637">
    <property type="term" value="C:nuclear inner membrane"/>
    <property type="evidence" value="ECO:0007669"/>
    <property type="project" value="UniProtKB-SubCell"/>
</dbReference>
<dbReference type="GO" id="GO:0005640">
    <property type="term" value="C:nuclear outer membrane"/>
    <property type="evidence" value="ECO:0007669"/>
    <property type="project" value="UniProtKB-SubCell"/>
</dbReference>
<dbReference type="GO" id="GO:0005654">
    <property type="term" value="C:nucleoplasm"/>
    <property type="evidence" value="ECO:0007669"/>
    <property type="project" value="UniProtKB-SubCell"/>
</dbReference>
<dbReference type="GO" id="GO:0005634">
    <property type="term" value="C:nucleus"/>
    <property type="evidence" value="ECO:0000250"/>
    <property type="project" value="HGNC-UCL"/>
</dbReference>
<dbReference type="GO" id="GO:0048471">
    <property type="term" value="C:perinuclear region of cytoplasm"/>
    <property type="evidence" value="ECO:0000250"/>
    <property type="project" value="HGNC-UCL"/>
</dbReference>
<dbReference type="GO" id="GO:1990904">
    <property type="term" value="C:ribonucleoprotein complex"/>
    <property type="evidence" value="ECO:0000266"/>
    <property type="project" value="RGD"/>
</dbReference>
<dbReference type="GO" id="GO:0048487">
    <property type="term" value="F:beta-tubulin binding"/>
    <property type="evidence" value="ECO:0000250"/>
    <property type="project" value="HGNC-UCL"/>
</dbReference>
<dbReference type="GO" id="GO:0003730">
    <property type="term" value="F:mRNA 3'-UTR binding"/>
    <property type="evidence" value="ECO:0000318"/>
    <property type="project" value="GO_Central"/>
</dbReference>
<dbReference type="GO" id="GO:0003723">
    <property type="term" value="F:RNA binding"/>
    <property type="evidence" value="ECO:0000266"/>
    <property type="project" value="RGD"/>
</dbReference>
<dbReference type="GO" id="GO:0003697">
    <property type="term" value="F:single-stranded DNA binding"/>
    <property type="evidence" value="ECO:0000266"/>
    <property type="project" value="RGD"/>
</dbReference>
<dbReference type="GO" id="GO:0031625">
    <property type="term" value="F:ubiquitin protein ligase binding"/>
    <property type="evidence" value="ECO:0000266"/>
    <property type="project" value="RGD"/>
</dbReference>
<dbReference type="GO" id="GO:0006914">
    <property type="term" value="P:autophagy"/>
    <property type="evidence" value="ECO:0007669"/>
    <property type="project" value="UniProtKB-KW"/>
</dbReference>
<dbReference type="GO" id="GO:0000957">
    <property type="term" value="P:mitochondrial RNA catabolic process"/>
    <property type="evidence" value="ECO:0000266"/>
    <property type="project" value="RGD"/>
</dbReference>
<dbReference type="GO" id="GO:0051028">
    <property type="term" value="P:mRNA transport"/>
    <property type="evidence" value="ECO:0007669"/>
    <property type="project" value="UniProtKB-KW"/>
</dbReference>
<dbReference type="GO" id="GO:0000961">
    <property type="term" value="P:negative regulation of mitochondrial RNA catabolic process"/>
    <property type="evidence" value="ECO:0000266"/>
    <property type="project" value="RGD"/>
</dbReference>
<dbReference type="GO" id="GO:0070129">
    <property type="term" value="P:regulation of mitochondrial translation"/>
    <property type="evidence" value="ECO:0000266"/>
    <property type="project" value="RGD"/>
</dbReference>
<dbReference type="FunFam" id="1.25.40.10:FF:000428">
    <property type="entry name" value="Leucine-rich PPR motif-containing protein, mitochondrial"/>
    <property type="match status" value="1"/>
</dbReference>
<dbReference type="FunFam" id="1.25.40.10:FF:002563">
    <property type="entry name" value="Leucine-rich PPR motif-containing protein, mitochondrial"/>
    <property type="match status" value="1"/>
</dbReference>
<dbReference type="Gene3D" id="1.25.40.10">
    <property type="entry name" value="Tetratricopeptide repeat domain"/>
    <property type="match status" value="3"/>
</dbReference>
<dbReference type="InterPro" id="IPR033490">
    <property type="entry name" value="LRP130"/>
</dbReference>
<dbReference type="InterPro" id="IPR002885">
    <property type="entry name" value="Pentatricopeptide_rpt"/>
</dbReference>
<dbReference type="InterPro" id="IPR033443">
    <property type="entry name" value="PROP1-like_PPR_dom"/>
</dbReference>
<dbReference type="InterPro" id="IPR011990">
    <property type="entry name" value="TPR-like_helical_dom_sf"/>
</dbReference>
<dbReference type="NCBIfam" id="TIGR00756">
    <property type="entry name" value="PPR"/>
    <property type="match status" value="2"/>
</dbReference>
<dbReference type="PANTHER" id="PTHR46669">
    <property type="entry name" value="LEUCINE-RICH PPR MOTIF-CONTAINING PROTEIN, MITOCHONDRIAL"/>
    <property type="match status" value="1"/>
</dbReference>
<dbReference type="PANTHER" id="PTHR46669:SF1">
    <property type="entry name" value="LEUCINE-RICH PPR MOTIF-CONTAINING PROTEIN, MITOCHONDRIAL"/>
    <property type="match status" value="1"/>
</dbReference>
<dbReference type="Pfam" id="PF01535">
    <property type="entry name" value="PPR"/>
    <property type="match status" value="3"/>
</dbReference>
<dbReference type="Pfam" id="PF13812">
    <property type="entry name" value="PPR_3"/>
    <property type="match status" value="1"/>
</dbReference>
<dbReference type="Pfam" id="PF17177">
    <property type="entry name" value="PPR_long"/>
    <property type="match status" value="1"/>
</dbReference>
<dbReference type="SUPFAM" id="SSF48452">
    <property type="entry name" value="TPR-like"/>
    <property type="match status" value="1"/>
</dbReference>
<dbReference type="PROSITE" id="PS51375">
    <property type="entry name" value="PPR"/>
    <property type="match status" value="11"/>
</dbReference>
<comment type="function">
    <text evidence="2">May play a role in RNA metabolism in both nuclei and mitochondria. In the nucleus binds to HNRPA1-associated poly(A) mRNAs and is part of nmRNP complexes at late stages of mRNA maturation which are possibly associated with nuclear mRNA export. Positively modulates nuclear export of mRNAs containing the EIF4E sensitivity element (4ESE) by binding simultaneously to both EIF4E and the 4ESE and acting as a platform for assembly for the RNA export complex (By similarity). Also binds to exportin XPO1/CRM1 to engage the nuclear pore and traffic the bound mRNAs to the cytoplasm (By similarity). May bind mature mRNA in the nucleus outer membrane. In mitochondria binds to poly(A) mRNA. Plays a role in translation or stability of mitochondrially encoded cytochrome c oxidase (COX) subunits. May be involved in transcription regulation. Cooperates with PPARGC1A to regulate certain mitochondrially encoded genes and gluconeogenic genes and may regulate docking of PPARGC1A to transcription factors. Seems to be involved in the transcription regulation of the multidrug-related genes MDR1 and MVP. Part of a nuclear factor that binds to the invMED1 element of MDR1 and MVP gene promoters. Binds single-stranded DNA (By similarity). Required for maintaining mitochondrial potential (By similarity). Suppresses the initiation of basal levels of autophagy and mitophagy by sustaining BCL2 levels (By similarity).</text>
</comment>
<comment type="subunit">
    <text evidence="2">Component of mRNP complexes associated with HNRPA1 (By similarity). Component of the complex, at least composed of LRPPRC, BECN1 and BCL2; the interactions prevent BECN1 from forming an autophagy-inducing complex with PIK3C3 (By similarity). Interacts with CECR2, HEBP2, MAP1S, UXT, PPARGC1A and FOXO1. Interacts (via N-terminus) with EIF4E; the interaction promotes association of EIF4E with 4ESE-containing mRNAs (By similarity). Interacts with exportin XPO1/CRM1; interacts both alone and in complex with EIF4E and 4ESE-containing mRNAs to form an EIF4E-dependent mRNA export complex (By similarity). Interacts with importin IPO8; the interaction occurs when LRPPRC is in its RNA-free form and returns LRPPRC to the nucleus for further export rounds (By similarity). Interacts with BECN1 (By similarity).</text>
</comment>
<comment type="subcellular location">
    <subcellularLocation>
        <location evidence="5">Mitochondrion</location>
    </subcellularLocation>
    <subcellularLocation>
        <location evidence="5">Nucleus</location>
    </subcellularLocation>
    <subcellularLocation>
        <location evidence="1">Nucleus</location>
        <location evidence="1">Nucleoplasm</location>
    </subcellularLocation>
    <subcellularLocation>
        <location evidence="1">Nucleus inner membrane</location>
    </subcellularLocation>
    <subcellularLocation>
        <location evidence="1">Nucleus outer membrane</location>
    </subcellularLocation>
</comment>
<comment type="tissue specificity">
    <text evidence="5">Widely expressed. Expressed in liver, brain and a subset of small diameter sensory neurons in the dorsal root ganglion (at protein level).</text>
</comment>
<comment type="induction">
    <text evidence="5">Induced by NGF in nociceptors.</text>
</comment>
<feature type="transit peptide" description="Mitochondrion" evidence="4">
    <location>
        <begin position="1"/>
        <end position="77"/>
    </location>
</feature>
<feature type="chain" id="PRO_0000295547" description="Leucine-rich PPR motif-containing protein, mitochondrial">
    <location>
        <begin position="78"/>
        <end position="1392"/>
    </location>
</feature>
<feature type="repeat" description="PPR 1">
    <location>
        <begin position="125"/>
        <end position="159"/>
    </location>
</feature>
<feature type="repeat" description="PPR 2">
    <location>
        <begin position="160"/>
        <end position="194"/>
    </location>
</feature>
<feature type="repeat" description="PPR 3">
    <location>
        <begin position="195"/>
        <end position="229"/>
    </location>
</feature>
<feature type="repeat" description="PPR 4">
    <location>
        <begin position="230"/>
        <end position="264"/>
    </location>
</feature>
<feature type="repeat" description="PPR 5">
    <location>
        <begin position="265"/>
        <end position="299"/>
    </location>
</feature>
<feature type="repeat" description="PPR 6">
    <location>
        <begin position="300"/>
        <end position="334"/>
    </location>
</feature>
<feature type="repeat" description="PPR 7">
    <location>
        <begin position="402"/>
        <end position="436"/>
    </location>
</feature>
<feature type="repeat" description="PPR 8">
    <location>
        <begin position="437"/>
        <end position="471"/>
    </location>
</feature>
<feature type="repeat" description="PPR 9">
    <location>
        <begin position="677"/>
        <end position="708"/>
    </location>
</feature>
<feature type="repeat" description="PPR 10">
    <location>
        <begin position="709"/>
        <end position="745"/>
    </location>
</feature>
<feature type="repeat" description="PPR 11">
    <location>
        <begin position="746"/>
        <end position="783"/>
    </location>
</feature>
<feature type="repeat" description="PPR 12">
    <location>
        <begin position="784"/>
        <end position="820"/>
    </location>
</feature>
<feature type="repeat" description="PPR 13">
    <location>
        <begin position="821"/>
        <end position="856"/>
    </location>
</feature>
<feature type="repeat" description="PPR 14">
    <location>
        <begin position="953"/>
        <end position="987"/>
    </location>
</feature>
<feature type="repeat" description="PPR 15">
    <location>
        <begin position="1030"/>
        <end position="1064"/>
    </location>
</feature>
<feature type="repeat" description="PPR 16">
    <location>
        <begin position="1065"/>
        <end position="1101"/>
    </location>
</feature>
<feature type="repeat" description="PPR 17">
    <location>
        <begin position="1102"/>
        <end position="1136"/>
    </location>
</feature>
<feature type="repeat" description="PPR 18">
    <location>
        <begin position="1137"/>
        <end position="1173"/>
    </location>
</feature>
<feature type="repeat" description="PPR 19">
    <location>
        <begin position="1174"/>
        <end position="1208"/>
    </location>
</feature>
<feature type="repeat" description="PPR 20">
    <location>
        <begin position="1315"/>
        <end position="1349"/>
    </location>
</feature>
<feature type="modified residue" description="N6-acetyllysine" evidence="3">
    <location>
        <position position="151"/>
    </location>
</feature>
<feature type="modified residue" description="N6-acetyllysine" evidence="2">
    <location>
        <position position="186"/>
    </location>
</feature>
<feature type="modified residue" description="N6-acetyllysine" evidence="2">
    <location>
        <position position="291"/>
    </location>
</feature>
<feature type="modified residue" description="N6-acetyllysine" evidence="3">
    <location>
        <position position="462"/>
    </location>
</feature>
<feature type="modified residue" description="N6-acetyllysine" evidence="2">
    <location>
        <position position="749"/>
    </location>
</feature>
<feature type="modified residue" description="Phosphoserine" evidence="2">
    <location>
        <position position="1025"/>
    </location>
</feature>
<feature type="modified residue" description="Phosphoserine" evidence="6">
    <location>
        <position position="1026"/>
    </location>
</feature>
<feature type="modified residue" description="Phosphoserine" evidence="2">
    <location>
        <position position="1028"/>
    </location>
</feature>
<feature type="modified residue" description="Phosphoserine" evidence="2">
    <location>
        <position position="1137"/>
    </location>
</feature>
<proteinExistence type="evidence at protein level"/>